<proteinExistence type="inferred from homology"/>
<name>RSD_SALTY</name>
<feature type="chain" id="PRO_0000097479" description="Regulator of sigma D">
    <location>
        <begin position="1"/>
        <end position="162"/>
    </location>
</feature>
<sequence>MLNQLENLTERVGGSNKLVDRWLDVRKHLLVAYYNLVGIKPGKESYMRLNEKALDDFCQSLVDYLSAGHFSIYERILHKLEGNGQLLHAAKIWPLLEDNTQRIMDYYDTSLETAIDHDNCLEFQQALSDIGEALEARFVLEDKLIMLVFDAMHDGARVKRPA</sequence>
<organism>
    <name type="scientific">Salmonella typhimurium (strain LT2 / SGSC1412 / ATCC 700720)</name>
    <dbReference type="NCBI Taxonomy" id="99287"/>
    <lineage>
        <taxon>Bacteria</taxon>
        <taxon>Pseudomonadati</taxon>
        <taxon>Pseudomonadota</taxon>
        <taxon>Gammaproteobacteria</taxon>
        <taxon>Enterobacterales</taxon>
        <taxon>Enterobacteriaceae</taxon>
        <taxon>Salmonella</taxon>
    </lineage>
</organism>
<gene>
    <name evidence="1" type="primary">rsd</name>
    <name type="ordered locus">STM4165</name>
    <name type="ORF">STMF1.32</name>
</gene>
<accession>Q9L9I6</accession>
<keyword id="KW-0963">Cytoplasm</keyword>
<keyword id="KW-1185">Reference proteome</keyword>
<keyword id="KW-0804">Transcription</keyword>
<keyword id="KW-0805">Transcription regulation</keyword>
<evidence type="ECO:0000255" key="1">
    <source>
        <dbReference type="HAMAP-Rule" id="MF_01181"/>
    </source>
</evidence>
<comment type="function">
    <text evidence="1">Binds RpoD and negatively regulates RpoD-mediated transcription activation by preventing the interaction between the primary sigma factor RpoD with the catalytic core of the RNA polymerase and with promoter DNA. May be involved in replacement of the RNA polymerase sigma subunit from RpoD to RpoS during the transition from exponential growth to the stationary phase.</text>
</comment>
<comment type="subunit">
    <text evidence="1">Interacts with RpoD.</text>
</comment>
<comment type="subcellular location">
    <subcellularLocation>
        <location evidence="1">Cytoplasm</location>
    </subcellularLocation>
</comment>
<comment type="similarity">
    <text evidence="1">Belongs to the Rsd/AlgQ family.</text>
</comment>
<protein>
    <recommendedName>
        <fullName evidence="1">Regulator of sigma D</fullName>
    </recommendedName>
</protein>
<reference key="1">
    <citation type="journal article" date="2001" name="Nature">
        <title>Complete genome sequence of Salmonella enterica serovar Typhimurium LT2.</title>
        <authorList>
            <person name="McClelland M."/>
            <person name="Sanderson K.E."/>
            <person name="Spieth J."/>
            <person name="Clifton S.W."/>
            <person name="Latreille P."/>
            <person name="Courtney L."/>
            <person name="Porwollik S."/>
            <person name="Ali J."/>
            <person name="Dante M."/>
            <person name="Du F."/>
            <person name="Hou S."/>
            <person name="Layman D."/>
            <person name="Leonard S."/>
            <person name="Nguyen C."/>
            <person name="Scott K."/>
            <person name="Holmes A."/>
            <person name="Grewal N."/>
            <person name="Mulvaney E."/>
            <person name="Ryan E."/>
            <person name="Sun H."/>
            <person name="Florea L."/>
            <person name="Miller W."/>
            <person name="Stoneking T."/>
            <person name="Nhan M."/>
            <person name="Waterston R."/>
            <person name="Wilson R.K."/>
        </authorList>
    </citation>
    <scope>NUCLEOTIDE SEQUENCE [LARGE SCALE GENOMIC DNA]</scope>
    <source>
        <strain>LT2 / SGSC1412 / ATCC 700720</strain>
    </source>
</reference>
<dbReference type="EMBL" id="AF170176">
    <property type="protein sequence ID" value="AAF33507.1"/>
    <property type="molecule type" value="Genomic_DNA"/>
</dbReference>
<dbReference type="EMBL" id="AE006468">
    <property type="protein sequence ID" value="AAL22993.1"/>
    <property type="molecule type" value="Genomic_DNA"/>
</dbReference>
<dbReference type="RefSeq" id="NP_463034.1">
    <property type="nucleotide sequence ID" value="NC_003197.2"/>
</dbReference>
<dbReference type="RefSeq" id="WP_000934315.1">
    <property type="nucleotide sequence ID" value="NC_003197.2"/>
</dbReference>
<dbReference type="SMR" id="Q9L9I6"/>
<dbReference type="STRING" id="99287.STM4165"/>
<dbReference type="PaxDb" id="99287-STM4165"/>
<dbReference type="GeneID" id="1255691"/>
<dbReference type="KEGG" id="stm:STM4165"/>
<dbReference type="PATRIC" id="fig|99287.12.peg.4379"/>
<dbReference type="HOGENOM" id="CLU_142729_0_0_6"/>
<dbReference type="OMA" id="DVIDHWL"/>
<dbReference type="PhylomeDB" id="Q9L9I6"/>
<dbReference type="BioCyc" id="SENT99287:STM4165-MONOMER"/>
<dbReference type="Proteomes" id="UP000001014">
    <property type="component" value="Chromosome"/>
</dbReference>
<dbReference type="GO" id="GO:0005737">
    <property type="term" value="C:cytoplasm"/>
    <property type="evidence" value="ECO:0007669"/>
    <property type="project" value="UniProtKB-SubCell"/>
</dbReference>
<dbReference type="GO" id="GO:0006355">
    <property type="term" value="P:regulation of DNA-templated transcription"/>
    <property type="evidence" value="ECO:0007669"/>
    <property type="project" value="InterPro"/>
</dbReference>
<dbReference type="FunFam" id="1.20.120.1370:FF:000001">
    <property type="entry name" value="Regulator of sigma D"/>
    <property type="match status" value="1"/>
</dbReference>
<dbReference type="Gene3D" id="1.20.120.1370">
    <property type="entry name" value="Regulator of RNA polymerase sigma(70) subunit, domain 4"/>
    <property type="match status" value="1"/>
</dbReference>
<dbReference type="HAMAP" id="MF_01181">
    <property type="entry name" value="Rsd"/>
    <property type="match status" value="1"/>
</dbReference>
<dbReference type="InterPro" id="IPR038309">
    <property type="entry name" value="Rsd/AlgQ_sf"/>
</dbReference>
<dbReference type="InterPro" id="IPR023785">
    <property type="entry name" value="Sigma70_reg_Rsd"/>
</dbReference>
<dbReference type="InterPro" id="IPR007448">
    <property type="entry name" value="Sigma70_reg_Rsd_AlgQ"/>
</dbReference>
<dbReference type="NCBIfam" id="NF008723">
    <property type="entry name" value="PRK11718.1"/>
    <property type="match status" value="1"/>
</dbReference>
<dbReference type="Pfam" id="PF04353">
    <property type="entry name" value="Rsd_AlgQ"/>
    <property type="match status" value="1"/>
</dbReference>
<dbReference type="PIRSF" id="PIRSF016548">
    <property type="entry name" value="Rsd_AlgQ"/>
    <property type="match status" value="1"/>
</dbReference>